<organism>
    <name type="scientific">Xanthobacter autotrophicus (strain ATCC BAA-1158 / Py2)</name>
    <dbReference type="NCBI Taxonomy" id="78245"/>
    <lineage>
        <taxon>Bacteria</taxon>
        <taxon>Pseudomonadati</taxon>
        <taxon>Pseudomonadota</taxon>
        <taxon>Alphaproteobacteria</taxon>
        <taxon>Hyphomicrobiales</taxon>
        <taxon>Xanthobacteraceae</taxon>
        <taxon>Xanthobacter</taxon>
    </lineage>
</organism>
<proteinExistence type="inferred from homology"/>
<feature type="chain" id="PRO_1000137739" description="Chaperone protein DnaJ">
    <location>
        <begin position="1"/>
        <end position="379"/>
    </location>
</feature>
<feature type="domain" description="J" evidence="1">
    <location>
        <begin position="5"/>
        <end position="70"/>
    </location>
</feature>
<feature type="repeat" description="CXXCXGXG motif">
    <location>
        <begin position="147"/>
        <end position="154"/>
    </location>
</feature>
<feature type="repeat" description="CXXCXGXG motif">
    <location>
        <begin position="164"/>
        <end position="171"/>
    </location>
</feature>
<feature type="repeat" description="CXXCXGXG motif">
    <location>
        <begin position="186"/>
        <end position="193"/>
    </location>
</feature>
<feature type="repeat" description="CXXCXGXG motif">
    <location>
        <begin position="200"/>
        <end position="207"/>
    </location>
</feature>
<feature type="zinc finger region" description="CR-type" evidence="1">
    <location>
        <begin position="134"/>
        <end position="212"/>
    </location>
</feature>
<feature type="binding site" evidence="1">
    <location>
        <position position="147"/>
    </location>
    <ligand>
        <name>Zn(2+)</name>
        <dbReference type="ChEBI" id="CHEBI:29105"/>
        <label>1</label>
    </ligand>
</feature>
<feature type="binding site" evidence="1">
    <location>
        <position position="150"/>
    </location>
    <ligand>
        <name>Zn(2+)</name>
        <dbReference type="ChEBI" id="CHEBI:29105"/>
        <label>1</label>
    </ligand>
</feature>
<feature type="binding site" evidence="1">
    <location>
        <position position="164"/>
    </location>
    <ligand>
        <name>Zn(2+)</name>
        <dbReference type="ChEBI" id="CHEBI:29105"/>
        <label>2</label>
    </ligand>
</feature>
<feature type="binding site" evidence="1">
    <location>
        <position position="167"/>
    </location>
    <ligand>
        <name>Zn(2+)</name>
        <dbReference type="ChEBI" id="CHEBI:29105"/>
        <label>2</label>
    </ligand>
</feature>
<feature type="binding site" evidence="1">
    <location>
        <position position="186"/>
    </location>
    <ligand>
        <name>Zn(2+)</name>
        <dbReference type="ChEBI" id="CHEBI:29105"/>
        <label>2</label>
    </ligand>
</feature>
<feature type="binding site" evidence="1">
    <location>
        <position position="189"/>
    </location>
    <ligand>
        <name>Zn(2+)</name>
        <dbReference type="ChEBI" id="CHEBI:29105"/>
        <label>2</label>
    </ligand>
</feature>
<feature type="binding site" evidence="1">
    <location>
        <position position="200"/>
    </location>
    <ligand>
        <name>Zn(2+)</name>
        <dbReference type="ChEBI" id="CHEBI:29105"/>
        <label>1</label>
    </ligand>
</feature>
<feature type="binding site" evidence="1">
    <location>
        <position position="203"/>
    </location>
    <ligand>
        <name>Zn(2+)</name>
        <dbReference type="ChEBI" id="CHEBI:29105"/>
        <label>1</label>
    </ligand>
</feature>
<comment type="function">
    <text evidence="1">Participates actively in the response to hyperosmotic and heat shock by preventing the aggregation of stress-denatured proteins and by disaggregating proteins, also in an autonomous, DnaK-independent fashion. Unfolded proteins bind initially to DnaJ; upon interaction with the DnaJ-bound protein, DnaK hydrolyzes its bound ATP, resulting in the formation of a stable complex. GrpE releases ADP from DnaK; ATP binding to DnaK triggers the release of the substrate protein, thus completing the reaction cycle. Several rounds of ATP-dependent interactions between DnaJ, DnaK and GrpE are required for fully efficient folding. Also involved, together with DnaK and GrpE, in the DNA replication of plasmids through activation of initiation proteins.</text>
</comment>
<comment type="cofactor">
    <cofactor evidence="1">
        <name>Zn(2+)</name>
        <dbReference type="ChEBI" id="CHEBI:29105"/>
    </cofactor>
    <text evidence="1">Binds 2 Zn(2+) ions per monomer.</text>
</comment>
<comment type="subunit">
    <text evidence="1">Homodimer.</text>
</comment>
<comment type="subcellular location">
    <subcellularLocation>
        <location evidence="1">Cytoplasm</location>
    </subcellularLocation>
</comment>
<comment type="domain">
    <text evidence="1">The J domain is necessary and sufficient to stimulate DnaK ATPase activity. Zinc center 1 plays an important role in the autonomous, DnaK-independent chaperone activity of DnaJ. Zinc center 2 is essential for interaction with DnaK and for DnaJ activity.</text>
</comment>
<comment type="similarity">
    <text evidence="1">Belongs to the DnaJ family.</text>
</comment>
<sequence length="379" mass="40832">MAKRDYYETLGCDRGADDTVLKASYRKLAMKWHPDRSQGNGEAEVMFKEVNEAYEVLKDPQKRAAYDRFGHAAFENGGGGGPGFGNDFASSFADIFDDLFGGAMNRGRGGGQQRGRGADLRYNMEITLEEAFSGKTAQIKIPTSVSCETCSGTGAKPGTQPKACRMCGGAGKIRHAQGFFTLERTCPNCQGRGSVIEDPCSDCGGAGRVTRERNLSVQIPAGVEDGTRIRLGGEGEAGVRGGAAGDLYIFLSIEPHTFFQREGADLYCRVPISMVTAALGGTVEVPTIDGDKSKVKIPEGTQSQKRFRLSGKGMPIMRARNHGDMYVQVVVETPQKLTKRQKELLAEFEKDSSGETHPESTGFFAKVKEFFQGAAGEGA</sequence>
<accession>A7IC67</accession>
<gene>
    <name evidence="1" type="primary">dnaJ</name>
    <name type="ordered locus">Xaut_0352</name>
</gene>
<evidence type="ECO:0000255" key="1">
    <source>
        <dbReference type="HAMAP-Rule" id="MF_01152"/>
    </source>
</evidence>
<name>DNAJ_XANP2</name>
<keyword id="KW-0143">Chaperone</keyword>
<keyword id="KW-0963">Cytoplasm</keyword>
<keyword id="KW-0235">DNA replication</keyword>
<keyword id="KW-0479">Metal-binding</keyword>
<keyword id="KW-1185">Reference proteome</keyword>
<keyword id="KW-0677">Repeat</keyword>
<keyword id="KW-0346">Stress response</keyword>
<keyword id="KW-0862">Zinc</keyword>
<keyword id="KW-0863">Zinc-finger</keyword>
<reference key="1">
    <citation type="submission" date="2007-07" db="EMBL/GenBank/DDBJ databases">
        <title>Complete sequence of chromosome of Xanthobacter autotrophicus Py2.</title>
        <authorList>
            <consortium name="US DOE Joint Genome Institute"/>
            <person name="Copeland A."/>
            <person name="Lucas S."/>
            <person name="Lapidus A."/>
            <person name="Barry K."/>
            <person name="Glavina del Rio T."/>
            <person name="Hammon N."/>
            <person name="Israni S."/>
            <person name="Dalin E."/>
            <person name="Tice H."/>
            <person name="Pitluck S."/>
            <person name="Sims D."/>
            <person name="Brettin T."/>
            <person name="Bruce D."/>
            <person name="Detter J.C."/>
            <person name="Han C."/>
            <person name="Tapia R."/>
            <person name="Brainard J."/>
            <person name="Schmutz J."/>
            <person name="Larimer F."/>
            <person name="Land M."/>
            <person name="Hauser L."/>
            <person name="Kyrpides N."/>
            <person name="Kim E."/>
            <person name="Ensigns S.A."/>
            <person name="Richardson P."/>
        </authorList>
    </citation>
    <scope>NUCLEOTIDE SEQUENCE [LARGE SCALE GENOMIC DNA]</scope>
    <source>
        <strain>ATCC BAA-1158 / Py2</strain>
    </source>
</reference>
<protein>
    <recommendedName>
        <fullName evidence="1">Chaperone protein DnaJ</fullName>
    </recommendedName>
</protein>
<dbReference type="EMBL" id="CP000781">
    <property type="protein sequence ID" value="ABS65610.1"/>
    <property type="molecule type" value="Genomic_DNA"/>
</dbReference>
<dbReference type="SMR" id="A7IC67"/>
<dbReference type="STRING" id="78245.Xaut_0352"/>
<dbReference type="KEGG" id="xau:Xaut_0352"/>
<dbReference type="eggNOG" id="COG0484">
    <property type="taxonomic scope" value="Bacteria"/>
</dbReference>
<dbReference type="HOGENOM" id="CLU_017633_0_7_5"/>
<dbReference type="OrthoDB" id="9779889at2"/>
<dbReference type="PhylomeDB" id="A7IC67"/>
<dbReference type="Proteomes" id="UP000002417">
    <property type="component" value="Chromosome"/>
</dbReference>
<dbReference type="GO" id="GO:0005737">
    <property type="term" value="C:cytoplasm"/>
    <property type="evidence" value="ECO:0007669"/>
    <property type="project" value="UniProtKB-SubCell"/>
</dbReference>
<dbReference type="GO" id="GO:0005524">
    <property type="term" value="F:ATP binding"/>
    <property type="evidence" value="ECO:0007669"/>
    <property type="project" value="InterPro"/>
</dbReference>
<dbReference type="GO" id="GO:0031072">
    <property type="term" value="F:heat shock protein binding"/>
    <property type="evidence" value="ECO:0007669"/>
    <property type="project" value="InterPro"/>
</dbReference>
<dbReference type="GO" id="GO:0051082">
    <property type="term" value="F:unfolded protein binding"/>
    <property type="evidence" value="ECO:0007669"/>
    <property type="project" value="UniProtKB-UniRule"/>
</dbReference>
<dbReference type="GO" id="GO:0008270">
    <property type="term" value="F:zinc ion binding"/>
    <property type="evidence" value="ECO:0007669"/>
    <property type="project" value="UniProtKB-UniRule"/>
</dbReference>
<dbReference type="GO" id="GO:0051085">
    <property type="term" value="P:chaperone cofactor-dependent protein refolding"/>
    <property type="evidence" value="ECO:0007669"/>
    <property type="project" value="TreeGrafter"/>
</dbReference>
<dbReference type="GO" id="GO:0006260">
    <property type="term" value="P:DNA replication"/>
    <property type="evidence" value="ECO:0007669"/>
    <property type="project" value="UniProtKB-KW"/>
</dbReference>
<dbReference type="GO" id="GO:0042026">
    <property type="term" value="P:protein refolding"/>
    <property type="evidence" value="ECO:0007669"/>
    <property type="project" value="TreeGrafter"/>
</dbReference>
<dbReference type="GO" id="GO:0009408">
    <property type="term" value="P:response to heat"/>
    <property type="evidence" value="ECO:0007669"/>
    <property type="project" value="InterPro"/>
</dbReference>
<dbReference type="CDD" id="cd06257">
    <property type="entry name" value="DnaJ"/>
    <property type="match status" value="1"/>
</dbReference>
<dbReference type="CDD" id="cd10747">
    <property type="entry name" value="DnaJ_C"/>
    <property type="match status" value="1"/>
</dbReference>
<dbReference type="CDD" id="cd10719">
    <property type="entry name" value="DnaJ_zf"/>
    <property type="match status" value="1"/>
</dbReference>
<dbReference type="FunFam" id="2.10.230.10:FF:000002">
    <property type="entry name" value="Molecular chaperone DnaJ"/>
    <property type="match status" value="1"/>
</dbReference>
<dbReference type="FunFam" id="2.60.260.20:FF:000004">
    <property type="entry name" value="Molecular chaperone DnaJ"/>
    <property type="match status" value="1"/>
</dbReference>
<dbReference type="Gene3D" id="1.10.287.110">
    <property type="entry name" value="DnaJ domain"/>
    <property type="match status" value="1"/>
</dbReference>
<dbReference type="Gene3D" id="2.10.230.10">
    <property type="entry name" value="Heat shock protein DnaJ, cysteine-rich domain"/>
    <property type="match status" value="1"/>
</dbReference>
<dbReference type="Gene3D" id="2.60.260.20">
    <property type="entry name" value="Urease metallochaperone UreE, N-terminal domain"/>
    <property type="match status" value="2"/>
</dbReference>
<dbReference type="HAMAP" id="MF_01152">
    <property type="entry name" value="DnaJ"/>
    <property type="match status" value="1"/>
</dbReference>
<dbReference type="InterPro" id="IPR012724">
    <property type="entry name" value="DnaJ"/>
</dbReference>
<dbReference type="InterPro" id="IPR002939">
    <property type="entry name" value="DnaJ_C"/>
</dbReference>
<dbReference type="InterPro" id="IPR001623">
    <property type="entry name" value="DnaJ_domain"/>
</dbReference>
<dbReference type="InterPro" id="IPR018253">
    <property type="entry name" value="DnaJ_domain_CS"/>
</dbReference>
<dbReference type="InterPro" id="IPR008971">
    <property type="entry name" value="HSP40/DnaJ_pept-bd"/>
</dbReference>
<dbReference type="InterPro" id="IPR001305">
    <property type="entry name" value="HSP_DnaJ_Cys-rich_dom"/>
</dbReference>
<dbReference type="InterPro" id="IPR036410">
    <property type="entry name" value="HSP_DnaJ_Cys-rich_dom_sf"/>
</dbReference>
<dbReference type="InterPro" id="IPR036869">
    <property type="entry name" value="J_dom_sf"/>
</dbReference>
<dbReference type="NCBIfam" id="TIGR02349">
    <property type="entry name" value="DnaJ_bact"/>
    <property type="match status" value="1"/>
</dbReference>
<dbReference type="NCBIfam" id="NF008035">
    <property type="entry name" value="PRK10767.1"/>
    <property type="match status" value="1"/>
</dbReference>
<dbReference type="PANTHER" id="PTHR43096:SF48">
    <property type="entry name" value="CHAPERONE PROTEIN DNAJ"/>
    <property type="match status" value="1"/>
</dbReference>
<dbReference type="PANTHER" id="PTHR43096">
    <property type="entry name" value="DNAJ HOMOLOG 1, MITOCHONDRIAL-RELATED"/>
    <property type="match status" value="1"/>
</dbReference>
<dbReference type="Pfam" id="PF00226">
    <property type="entry name" value="DnaJ"/>
    <property type="match status" value="1"/>
</dbReference>
<dbReference type="Pfam" id="PF01556">
    <property type="entry name" value="DnaJ_C"/>
    <property type="match status" value="1"/>
</dbReference>
<dbReference type="Pfam" id="PF00684">
    <property type="entry name" value="DnaJ_CXXCXGXG"/>
    <property type="match status" value="1"/>
</dbReference>
<dbReference type="PRINTS" id="PR00625">
    <property type="entry name" value="JDOMAIN"/>
</dbReference>
<dbReference type="SMART" id="SM00271">
    <property type="entry name" value="DnaJ"/>
    <property type="match status" value="1"/>
</dbReference>
<dbReference type="SUPFAM" id="SSF46565">
    <property type="entry name" value="Chaperone J-domain"/>
    <property type="match status" value="1"/>
</dbReference>
<dbReference type="SUPFAM" id="SSF57938">
    <property type="entry name" value="DnaJ/Hsp40 cysteine-rich domain"/>
    <property type="match status" value="1"/>
</dbReference>
<dbReference type="SUPFAM" id="SSF49493">
    <property type="entry name" value="HSP40/DnaJ peptide-binding domain"/>
    <property type="match status" value="2"/>
</dbReference>
<dbReference type="PROSITE" id="PS00636">
    <property type="entry name" value="DNAJ_1"/>
    <property type="match status" value="1"/>
</dbReference>
<dbReference type="PROSITE" id="PS50076">
    <property type="entry name" value="DNAJ_2"/>
    <property type="match status" value="1"/>
</dbReference>
<dbReference type="PROSITE" id="PS51188">
    <property type="entry name" value="ZF_CR"/>
    <property type="match status" value="1"/>
</dbReference>